<organism>
    <name type="scientific">Lactococcus lactis subsp. lactis (strain IL1403)</name>
    <name type="common">Streptococcus lactis</name>
    <dbReference type="NCBI Taxonomy" id="272623"/>
    <lineage>
        <taxon>Bacteria</taxon>
        <taxon>Bacillati</taxon>
        <taxon>Bacillota</taxon>
        <taxon>Bacilli</taxon>
        <taxon>Lactobacillales</taxon>
        <taxon>Streptococcaceae</taxon>
        <taxon>Lactococcus</taxon>
    </lineage>
</organism>
<evidence type="ECO:0000255" key="1">
    <source>
        <dbReference type="HAMAP-Rule" id="MF_00532"/>
    </source>
</evidence>
<evidence type="ECO:0000256" key="2">
    <source>
        <dbReference type="SAM" id="MobiDB-lite"/>
    </source>
</evidence>
<evidence type="ECO:0000305" key="3"/>
<accession>Q9CDG7</accession>
<name>RS9_LACLA</name>
<gene>
    <name evidence="1" type="primary">rpsI</name>
    <name type="ordered locus">LL2253</name>
    <name type="ORF">L0386</name>
</gene>
<comment type="similarity">
    <text evidence="1">Belongs to the universal ribosomal protein uS9 family.</text>
</comment>
<reference key="1">
    <citation type="journal article" date="2001" name="Genome Res.">
        <title>The complete genome sequence of the lactic acid bacterium Lactococcus lactis ssp. lactis IL1403.</title>
        <authorList>
            <person name="Bolotin A."/>
            <person name="Wincker P."/>
            <person name="Mauger S."/>
            <person name="Jaillon O."/>
            <person name="Malarme K."/>
            <person name="Weissenbach J."/>
            <person name="Ehrlich S.D."/>
            <person name="Sorokin A."/>
        </authorList>
    </citation>
    <scope>NUCLEOTIDE SEQUENCE [LARGE SCALE GENOMIC DNA]</scope>
    <source>
        <strain>IL1403</strain>
    </source>
</reference>
<keyword id="KW-1185">Reference proteome</keyword>
<keyword id="KW-0687">Ribonucleoprotein</keyword>
<keyword id="KW-0689">Ribosomal protein</keyword>
<proteinExistence type="inferred from homology"/>
<dbReference type="EMBL" id="AE005176">
    <property type="protein sequence ID" value="AAK06351.1"/>
    <property type="molecule type" value="Genomic_DNA"/>
</dbReference>
<dbReference type="PIR" id="E86906">
    <property type="entry name" value="E86906"/>
</dbReference>
<dbReference type="RefSeq" id="NP_268410.1">
    <property type="nucleotide sequence ID" value="NC_002662.1"/>
</dbReference>
<dbReference type="RefSeq" id="WP_004254378.1">
    <property type="nucleotide sequence ID" value="NC_002662.1"/>
</dbReference>
<dbReference type="SMR" id="Q9CDG7"/>
<dbReference type="PaxDb" id="272623-L0386"/>
<dbReference type="EnsemblBacteria" id="AAK06351">
    <property type="protein sequence ID" value="AAK06351"/>
    <property type="gene ID" value="L0386"/>
</dbReference>
<dbReference type="GeneID" id="89634602"/>
<dbReference type="KEGG" id="lla:L0386"/>
<dbReference type="PATRIC" id="fig|272623.7.peg.2418"/>
<dbReference type="eggNOG" id="COG0103">
    <property type="taxonomic scope" value="Bacteria"/>
</dbReference>
<dbReference type="HOGENOM" id="CLU_046483_2_1_9"/>
<dbReference type="OrthoDB" id="9803965at2"/>
<dbReference type="Proteomes" id="UP000002196">
    <property type="component" value="Chromosome"/>
</dbReference>
<dbReference type="GO" id="GO:0022627">
    <property type="term" value="C:cytosolic small ribosomal subunit"/>
    <property type="evidence" value="ECO:0007669"/>
    <property type="project" value="TreeGrafter"/>
</dbReference>
<dbReference type="GO" id="GO:0003723">
    <property type="term" value="F:RNA binding"/>
    <property type="evidence" value="ECO:0007669"/>
    <property type="project" value="TreeGrafter"/>
</dbReference>
<dbReference type="GO" id="GO:0003735">
    <property type="term" value="F:structural constituent of ribosome"/>
    <property type="evidence" value="ECO:0007669"/>
    <property type="project" value="InterPro"/>
</dbReference>
<dbReference type="GO" id="GO:0006412">
    <property type="term" value="P:translation"/>
    <property type="evidence" value="ECO:0007669"/>
    <property type="project" value="UniProtKB-UniRule"/>
</dbReference>
<dbReference type="FunFam" id="3.30.230.10:FF:000001">
    <property type="entry name" value="30S ribosomal protein S9"/>
    <property type="match status" value="1"/>
</dbReference>
<dbReference type="Gene3D" id="3.30.230.10">
    <property type="match status" value="1"/>
</dbReference>
<dbReference type="HAMAP" id="MF_00532_B">
    <property type="entry name" value="Ribosomal_uS9_B"/>
    <property type="match status" value="1"/>
</dbReference>
<dbReference type="InterPro" id="IPR020568">
    <property type="entry name" value="Ribosomal_Su5_D2-typ_SF"/>
</dbReference>
<dbReference type="InterPro" id="IPR000754">
    <property type="entry name" value="Ribosomal_uS9"/>
</dbReference>
<dbReference type="InterPro" id="IPR023035">
    <property type="entry name" value="Ribosomal_uS9_bac/plastid"/>
</dbReference>
<dbReference type="InterPro" id="IPR020574">
    <property type="entry name" value="Ribosomal_uS9_CS"/>
</dbReference>
<dbReference type="InterPro" id="IPR014721">
    <property type="entry name" value="Ribsml_uS5_D2-typ_fold_subgr"/>
</dbReference>
<dbReference type="NCBIfam" id="NF001099">
    <property type="entry name" value="PRK00132.1"/>
    <property type="match status" value="1"/>
</dbReference>
<dbReference type="PANTHER" id="PTHR21569">
    <property type="entry name" value="RIBOSOMAL PROTEIN S9"/>
    <property type="match status" value="1"/>
</dbReference>
<dbReference type="PANTHER" id="PTHR21569:SF1">
    <property type="entry name" value="SMALL RIBOSOMAL SUBUNIT PROTEIN US9M"/>
    <property type="match status" value="1"/>
</dbReference>
<dbReference type="Pfam" id="PF00380">
    <property type="entry name" value="Ribosomal_S9"/>
    <property type="match status" value="1"/>
</dbReference>
<dbReference type="SUPFAM" id="SSF54211">
    <property type="entry name" value="Ribosomal protein S5 domain 2-like"/>
    <property type="match status" value="1"/>
</dbReference>
<dbReference type="PROSITE" id="PS00360">
    <property type="entry name" value="RIBOSOMAL_S9"/>
    <property type="match status" value="1"/>
</dbReference>
<protein>
    <recommendedName>
        <fullName evidence="1">Small ribosomal subunit protein uS9</fullName>
    </recommendedName>
    <alternativeName>
        <fullName evidence="3">30S ribosomal protein S9</fullName>
    </alternativeName>
</protein>
<sequence>MAQVQYAGTGRRKNAVARVRLVPGTGKITVNGREVESYIPHADMRLVINQPFAATQTEGSYDTLVNVNGGGVSGQAGAIRHGIARALLQVDPDFRSALKRAGLLTRDARMVERKKPGLKKARKASQFSKR</sequence>
<feature type="chain" id="PRO_0000111366" description="Small ribosomal subunit protein uS9">
    <location>
        <begin position="1"/>
        <end position="130"/>
    </location>
</feature>
<feature type="region of interest" description="Disordered" evidence="2">
    <location>
        <begin position="111"/>
        <end position="130"/>
    </location>
</feature>
<feature type="compositionally biased region" description="Basic residues" evidence="2">
    <location>
        <begin position="116"/>
        <end position="130"/>
    </location>
</feature>